<dbReference type="EMBL" id="AP006618">
    <property type="protein sequence ID" value="BAD59930.1"/>
    <property type="molecule type" value="Genomic_DNA"/>
</dbReference>
<dbReference type="RefSeq" id="WP_011211612.1">
    <property type="nucleotide sequence ID" value="NC_006361.1"/>
</dbReference>
<dbReference type="SMR" id="Q5YPG1"/>
<dbReference type="STRING" id="247156.NFA_50780"/>
<dbReference type="GeneID" id="80330903"/>
<dbReference type="KEGG" id="nfa:NFA_50780"/>
<dbReference type="eggNOG" id="COG0048">
    <property type="taxonomic scope" value="Bacteria"/>
</dbReference>
<dbReference type="HOGENOM" id="CLU_104295_1_2_11"/>
<dbReference type="OrthoDB" id="9802366at2"/>
<dbReference type="Proteomes" id="UP000006820">
    <property type="component" value="Chromosome"/>
</dbReference>
<dbReference type="GO" id="GO:0015935">
    <property type="term" value="C:small ribosomal subunit"/>
    <property type="evidence" value="ECO:0007669"/>
    <property type="project" value="InterPro"/>
</dbReference>
<dbReference type="GO" id="GO:0019843">
    <property type="term" value="F:rRNA binding"/>
    <property type="evidence" value="ECO:0007669"/>
    <property type="project" value="UniProtKB-UniRule"/>
</dbReference>
<dbReference type="GO" id="GO:0003735">
    <property type="term" value="F:structural constituent of ribosome"/>
    <property type="evidence" value="ECO:0007669"/>
    <property type="project" value="InterPro"/>
</dbReference>
<dbReference type="GO" id="GO:0000049">
    <property type="term" value="F:tRNA binding"/>
    <property type="evidence" value="ECO:0007669"/>
    <property type="project" value="UniProtKB-UniRule"/>
</dbReference>
<dbReference type="GO" id="GO:0006412">
    <property type="term" value="P:translation"/>
    <property type="evidence" value="ECO:0007669"/>
    <property type="project" value="UniProtKB-UniRule"/>
</dbReference>
<dbReference type="CDD" id="cd03368">
    <property type="entry name" value="Ribosomal_S12"/>
    <property type="match status" value="1"/>
</dbReference>
<dbReference type="FunFam" id="2.40.50.140:FF:000001">
    <property type="entry name" value="30S ribosomal protein S12"/>
    <property type="match status" value="1"/>
</dbReference>
<dbReference type="Gene3D" id="2.40.50.140">
    <property type="entry name" value="Nucleic acid-binding proteins"/>
    <property type="match status" value="1"/>
</dbReference>
<dbReference type="HAMAP" id="MF_00403_B">
    <property type="entry name" value="Ribosomal_uS12_B"/>
    <property type="match status" value="1"/>
</dbReference>
<dbReference type="InterPro" id="IPR012340">
    <property type="entry name" value="NA-bd_OB-fold"/>
</dbReference>
<dbReference type="InterPro" id="IPR006032">
    <property type="entry name" value="Ribosomal_uS12"/>
</dbReference>
<dbReference type="InterPro" id="IPR005679">
    <property type="entry name" value="Ribosomal_uS12_bac"/>
</dbReference>
<dbReference type="NCBIfam" id="TIGR00981">
    <property type="entry name" value="rpsL_bact"/>
    <property type="match status" value="1"/>
</dbReference>
<dbReference type="PANTHER" id="PTHR11652">
    <property type="entry name" value="30S RIBOSOMAL PROTEIN S12 FAMILY MEMBER"/>
    <property type="match status" value="1"/>
</dbReference>
<dbReference type="Pfam" id="PF00164">
    <property type="entry name" value="Ribosom_S12_S23"/>
    <property type="match status" value="1"/>
</dbReference>
<dbReference type="PIRSF" id="PIRSF002133">
    <property type="entry name" value="Ribosomal_S12/S23"/>
    <property type="match status" value="1"/>
</dbReference>
<dbReference type="PRINTS" id="PR01034">
    <property type="entry name" value="RIBOSOMALS12"/>
</dbReference>
<dbReference type="SUPFAM" id="SSF50249">
    <property type="entry name" value="Nucleic acid-binding proteins"/>
    <property type="match status" value="1"/>
</dbReference>
<dbReference type="PROSITE" id="PS00055">
    <property type="entry name" value="RIBOSOMAL_S12"/>
    <property type="match status" value="1"/>
</dbReference>
<comment type="function">
    <text evidence="1">With S4 and S5 plays an important role in translational accuracy.</text>
</comment>
<comment type="function">
    <text evidence="1">Interacts with and stabilizes bases of the 16S rRNA that are involved in tRNA selection in the A site and with the mRNA backbone. Located at the interface of the 30S and 50S subunits, it traverses the body of the 30S subunit contacting proteins on the other side and probably holding the rRNA structure together. The combined cluster of proteins S8, S12 and S17 appears to hold together the shoulder and platform of the 30S subunit.</text>
</comment>
<comment type="subunit">
    <text evidence="1">Part of the 30S ribosomal subunit. Contacts proteins S8 and S17. May interact with IF1 in the 30S initiation complex.</text>
</comment>
<comment type="similarity">
    <text evidence="1">Belongs to the universal ribosomal protein uS12 family.</text>
</comment>
<comment type="caution">
    <text evidence="3">Because the enzyme that would modify Asp-89 to 3-methylthioaspartic acid has not been found in the proteome of this organism, that modification is not predicted.</text>
</comment>
<organism>
    <name type="scientific">Nocardia farcinica (strain IFM 10152)</name>
    <dbReference type="NCBI Taxonomy" id="247156"/>
    <lineage>
        <taxon>Bacteria</taxon>
        <taxon>Bacillati</taxon>
        <taxon>Actinomycetota</taxon>
        <taxon>Actinomycetes</taxon>
        <taxon>Mycobacteriales</taxon>
        <taxon>Nocardiaceae</taxon>
        <taxon>Nocardia</taxon>
    </lineage>
</organism>
<keyword id="KW-1185">Reference proteome</keyword>
<keyword id="KW-0687">Ribonucleoprotein</keyword>
<keyword id="KW-0689">Ribosomal protein</keyword>
<keyword id="KW-0694">RNA-binding</keyword>
<keyword id="KW-0699">rRNA-binding</keyword>
<keyword id="KW-0820">tRNA-binding</keyword>
<gene>
    <name evidence="1" type="primary">rpsL</name>
    <name type="ordered locus">NFA_50780</name>
</gene>
<accession>Q5YPG1</accession>
<sequence>MPTINQLVRKGRRDKVAKTKTAALKGSPQRRGVCTRVYTTTPKKPNSALRKVARVRLTSQVEVTAYIPGEGHNLQEHSMVLVRGGRVKDLPGVRYKIIRGSLDTQGVKNRKQARSRYGAKKEKS</sequence>
<protein>
    <recommendedName>
        <fullName evidence="1">Small ribosomal subunit protein uS12</fullName>
    </recommendedName>
    <alternativeName>
        <fullName evidence="3">30S ribosomal protein S12</fullName>
    </alternativeName>
</protein>
<feature type="chain" id="PRO_0000146277" description="Small ribosomal subunit protein uS12">
    <location>
        <begin position="1"/>
        <end position="124"/>
    </location>
</feature>
<feature type="region of interest" description="Disordered" evidence="2">
    <location>
        <begin position="9"/>
        <end position="32"/>
    </location>
</feature>
<feature type="region of interest" description="Disordered" evidence="2">
    <location>
        <begin position="105"/>
        <end position="124"/>
    </location>
</feature>
<feature type="compositionally biased region" description="Basic residues" evidence="2">
    <location>
        <begin position="108"/>
        <end position="118"/>
    </location>
</feature>
<reference key="1">
    <citation type="journal article" date="2004" name="Proc. Natl. Acad. Sci. U.S.A.">
        <title>The complete genomic sequence of Nocardia farcinica IFM 10152.</title>
        <authorList>
            <person name="Ishikawa J."/>
            <person name="Yamashita A."/>
            <person name="Mikami Y."/>
            <person name="Hoshino Y."/>
            <person name="Kurita H."/>
            <person name="Hotta K."/>
            <person name="Shiba T."/>
            <person name="Hattori M."/>
        </authorList>
    </citation>
    <scope>NUCLEOTIDE SEQUENCE [LARGE SCALE GENOMIC DNA]</scope>
    <source>
        <strain>IFM 10152</strain>
    </source>
</reference>
<proteinExistence type="inferred from homology"/>
<name>RS12_NOCFA</name>
<evidence type="ECO:0000255" key="1">
    <source>
        <dbReference type="HAMAP-Rule" id="MF_00403"/>
    </source>
</evidence>
<evidence type="ECO:0000256" key="2">
    <source>
        <dbReference type="SAM" id="MobiDB-lite"/>
    </source>
</evidence>
<evidence type="ECO:0000305" key="3"/>